<feature type="chain" id="PRO_0000289444" description="Lipoprotein signal peptidase">
    <location>
        <begin position="1"/>
        <end position="152"/>
    </location>
</feature>
<feature type="transmembrane region" description="Helical" evidence="1">
    <location>
        <begin position="5"/>
        <end position="25"/>
    </location>
</feature>
<feature type="transmembrane region" description="Helical" evidence="1">
    <location>
        <begin position="61"/>
        <end position="81"/>
    </location>
</feature>
<feature type="transmembrane region" description="Helical" evidence="1">
    <location>
        <begin position="84"/>
        <end position="104"/>
    </location>
</feature>
<feature type="transmembrane region" description="Helical" evidence="1">
    <location>
        <begin position="125"/>
        <end position="145"/>
    </location>
</feature>
<feature type="active site" evidence="1">
    <location>
        <position position="114"/>
    </location>
</feature>
<feature type="active site" evidence="1">
    <location>
        <position position="130"/>
    </location>
</feature>
<accession>Q1J798</accession>
<reference key="1">
    <citation type="journal article" date="2006" name="Proc. Natl. Acad. Sci. U.S.A.">
        <title>Molecular genetic anatomy of inter- and intraserotype variation in the human bacterial pathogen group A Streptococcus.</title>
        <authorList>
            <person name="Beres S.B."/>
            <person name="Richter E.W."/>
            <person name="Nagiec M.J."/>
            <person name="Sumby P."/>
            <person name="Porcella S.F."/>
            <person name="DeLeo F.R."/>
            <person name="Musser J.M."/>
        </authorList>
    </citation>
    <scope>NUCLEOTIDE SEQUENCE [LARGE SCALE GENOMIC DNA]</scope>
    <source>
        <strain>MGAS10750</strain>
    </source>
</reference>
<keyword id="KW-0064">Aspartyl protease</keyword>
<keyword id="KW-1003">Cell membrane</keyword>
<keyword id="KW-0378">Hydrolase</keyword>
<keyword id="KW-0472">Membrane</keyword>
<keyword id="KW-0645">Protease</keyword>
<keyword id="KW-0812">Transmembrane</keyword>
<keyword id="KW-1133">Transmembrane helix</keyword>
<dbReference type="EC" id="3.4.23.36" evidence="1"/>
<dbReference type="EMBL" id="CP000262">
    <property type="protein sequence ID" value="ABF37676.1"/>
    <property type="molecule type" value="Genomic_DNA"/>
</dbReference>
<dbReference type="SMR" id="Q1J798"/>
<dbReference type="KEGG" id="spi:MGAS10750_Spy0726"/>
<dbReference type="HOGENOM" id="CLU_083252_3_3_9"/>
<dbReference type="UniPathway" id="UPA00665"/>
<dbReference type="Proteomes" id="UP000002434">
    <property type="component" value="Chromosome"/>
</dbReference>
<dbReference type="GO" id="GO:0005886">
    <property type="term" value="C:plasma membrane"/>
    <property type="evidence" value="ECO:0007669"/>
    <property type="project" value="UniProtKB-SubCell"/>
</dbReference>
<dbReference type="GO" id="GO:0004190">
    <property type="term" value="F:aspartic-type endopeptidase activity"/>
    <property type="evidence" value="ECO:0007669"/>
    <property type="project" value="UniProtKB-UniRule"/>
</dbReference>
<dbReference type="GO" id="GO:0006508">
    <property type="term" value="P:proteolysis"/>
    <property type="evidence" value="ECO:0007669"/>
    <property type="project" value="UniProtKB-KW"/>
</dbReference>
<dbReference type="HAMAP" id="MF_00161">
    <property type="entry name" value="LspA"/>
    <property type="match status" value="1"/>
</dbReference>
<dbReference type="InterPro" id="IPR001872">
    <property type="entry name" value="Peptidase_A8"/>
</dbReference>
<dbReference type="NCBIfam" id="TIGR00077">
    <property type="entry name" value="lspA"/>
    <property type="match status" value="1"/>
</dbReference>
<dbReference type="PANTHER" id="PTHR33695">
    <property type="entry name" value="LIPOPROTEIN SIGNAL PEPTIDASE"/>
    <property type="match status" value="1"/>
</dbReference>
<dbReference type="PANTHER" id="PTHR33695:SF1">
    <property type="entry name" value="LIPOPROTEIN SIGNAL PEPTIDASE"/>
    <property type="match status" value="1"/>
</dbReference>
<dbReference type="Pfam" id="PF01252">
    <property type="entry name" value="Peptidase_A8"/>
    <property type="match status" value="1"/>
</dbReference>
<dbReference type="PRINTS" id="PR00781">
    <property type="entry name" value="LIPOSIGPTASE"/>
</dbReference>
<dbReference type="PROSITE" id="PS00855">
    <property type="entry name" value="SPASE_II"/>
    <property type="match status" value="1"/>
</dbReference>
<protein>
    <recommendedName>
        <fullName evidence="1">Lipoprotein signal peptidase</fullName>
        <ecNumber evidence="1">3.4.23.36</ecNumber>
    </recommendedName>
    <alternativeName>
        <fullName evidence="1">Prolipoprotein signal peptidase</fullName>
    </alternativeName>
    <alternativeName>
        <fullName evidence="1">Signal peptidase II</fullName>
        <shortName evidence="1">SPase II</shortName>
    </alternativeName>
</protein>
<evidence type="ECO:0000255" key="1">
    <source>
        <dbReference type="HAMAP-Rule" id="MF_00161"/>
    </source>
</evidence>
<proteinExistence type="inferred from homology"/>
<sequence length="152" mass="17272">MKKRLFVLSLILLVALDQLSKFWIVSHIALGEVKPFIPGIVSLTYLQNNGAAFSILQDQQWFFVVITVLVIGYAIYYLATHPHLNIWKQLALLLIISGGIGNFIDRLRLAYVIDMVHLDFVDFAIFNVADSYLTVGVILLVICLWKEEDYGN</sequence>
<comment type="function">
    <text evidence="1">This protein specifically catalyzes the removal of signal peptides from prolipoproteins.</text>
</comment>
<comment type="catalytic activity">
    <reaction evidence="1">
        <text>Release of signal peptides from bacterial membrane prolipoproteins. Hydrolyzes -Xaa-Yaa-Zaa-|-(S,diacylglyceryl)Cys-, in which Xaa is hydrophobic (preferably Leu), and Yaa (Ala or Ser) and Zaa (Gly or Ala) have small, neutral side chains.</text>
        <dbReference type="EC" id="3.4.23.36"/>
    </reaction>
</comment>
<comment type="pathway">
    <text evidence="1">Protein modification; lipoprotein biosynthesis (signal peptide cleavage).</text>
</comment>
<comment type="subcellular location">
    <subcellularLocation>
        <location evidence="1">Cell membrane</location>
        <topology evidence="1">Multi-pass membrane protein</topology>
    </subcellularLocation>
</comment>
<comment type="similarity">
    <text evidence="1">Belongs to the peptidase A8 family.</text>
</comment>
<gene>
    <name evidence="1" type="primary">lspA</name>
    <name type="ordered locus">MGAS10750_Spy0726</name>
</gene>
<organism>
    <name type="scientific">Streptococcus pyogenes serotype M4 (strain MGAS10750)</name>
    <dbReference type="NCBI Taxonomy" id="370554"/>
    <lineage>
        <taxon>Bacteria</taxon>
        <taxon>Bacillati</taxon>
        <taxon>Bacillota</taxon>
        <taxon>Bacilli</taxon>
        <taxon>Lactobacillales</taxon>
        <taxon>Streptococcaceae</taxon>
        <taxon>Streptococcus</taxon>
    </lineage>
</organism>
<name>LSPA_STRPF</name>